<comment type="function">
    <text evidence="1">Responsible for synthesis of pseudouridine from uracil-55 in the psi GC loop of transfer RNAs.</text>
</comment>
<comment type="catalytic activity">
    <reaction evidence="1">
        <text>uridine(55) in tRNA = pseudouridine(55) in tRNA</text>
        <dbReference type="Rhea" id="RHEA:42532"/>
        <dbReference type="Rhea" id="RHEA-COMP:10101"/>
        <dbReference type="Rhea" id="RHEA-COMP:10102"/>
        <dbReference type="ChEBI" id="CHEBI:65314"/>
        <dbReference type="ChEBI" id="CHEBI:65315"/>
        <dbReference type="EC" id="5.4.99.25"/>
    </reaction>
</comment>
<comment type="similarity">
    <text evidence="1">Belongs to the pseudouridine synthase TruB family. Type 1 subfamily.</text>
</comment>
<sequence>MTDPLSRAGLVIVDKPAGMTSHDVVSRCRRIFSTRKVGHAGTLDPMATGVLVIGIERATKIMGLLTLTTKSYAATIRFGQSTSTDDAEGEVLQTISASHLTEVDIEAAVAGLRGDIAQVPSSVSAIKVDGQRAYKLAREGQSVELAARPVRISRFDVLAVRGSGEDLIDVDVEIDCSSGTYIRALARDAGAALGVGGHLTALRRTRVGDFGLDRARTLEELADGATLTLDLDSACRQGFPRRDLDAAEVDAVRNGRPLAPAGIEGTYAAVDADDRVIALLADKGSRTTSVVVLRPANL</sequence>
<protein>
    <recommendedName>
        <fullName evidence="1">tRNA pseudouridine synthase B</fullName>
        <ecNumber evidence="1">5.4.99.25</ecNumber>
    </recommendedName>
    <alternativeName>
        <fullName evidence="1">tRNA pseudouridine(55) synthase</fullName>
        <shortName evidence="1">Psi55 synthase</shortName>
    </alternativeName>
    <alternativeName>
        <fullName evidence="1">tRNA pseudouridylate synthase</fullName>
    </alternativeName>
    <alternativeName>
        <fullName evidence="1">tRNA-uridine isomerase</fullName>
    </alternativeName>
</protein>
<proteinExistence type="inferred from homology"/>
<organism>
    <name type="scientific">Mycobacteroides abscessus (strain ATCC 19977 / DSM 44196 / CCUG 20993 / CIP 104536 / JCM 13569 / NCTC 13031 / TMC 1543 / L948)</name>
    <name type="common">Mycobacterium abscessus</name>
    <dbReference type="NCBI Taxonomy" id="561007"/>
    <lineage>
        <taxon>Bacteria</taxon>
        <taxon>Bacillati</taxon>
        <taxon>Actinomycetota</taxon>
        <taxon>Actinomycetes</taxon>
        <taxon>Mycobacteriales</taxon>
        <taxon>Mycobacteriaceae</taxon>
        <taxon>Mycobacteroides</taxon>
        <taxon>Mycobacteroides abscessus</taxon>
    </lineage>
</organism>
<dbReference type="EC" id="5.4.99.25" evidence="1"/>
<dbReference type="EMBL" id="CU458896">
    <property type="protein sequence ID" value="CAM63193.1"/>
    <property type="molecule type" value="Genomic_DNA"/>
</dbReference>
<dbReference type="RefSeq" id="WP_012296636.1">
    <property type="nucleotide sequence ID" value="NZ_MLCG01000003.1"/>
</dbReference>
<dbReference type="SMR" id="B1MD72"/>
<dbReference type="GeneID" id="93380048"/>
<dbReference type="KEGG" id="mab:MAB_3116c"/>
<dbReference type="Proteomes" id="UP000007137">
    <property type="component" value="Chromosome"/>
</dbReference>
<dbReference type="GO" id="GO:0003723">
    <property type="term" value="F:RNA binding"/>
    <property type="evidence" value="ECO:0007669"/>
    <property type="project" value="InterPro"/>
</dbReference>
<dbReference type="GO" id="GO:0160148">
    <property type="term" value="F:tRNA pseudouridine(55) synthase activity"/>
    <property type="evidence" value="ECO:0007669"/>
    <property type="project" value="UniProtKB-EC"/>
</dbReference>
<dbReference type="GO" id="GO:1990481">
    <property type="term" value="P:mRNA pseudouridine synthesis"/>
    <property type="evidence" value="ECO:0007669"/>
    <property type="project" value="TreeGrafter"/>
</dbReference>
<dbReference type="GO" id="GO:0031119">
    <property type="term" value="P:tRNA pseudouridine synthesis"/>
    <property type="evidence" value="ECO:0007669"/>
    <property type="project" value="UniProtKB-UniRule"/>
</dbReference>
<dbReference type="CDD" id="cd02573">
    <property type="entry name" value="PseudoU_synth_EcTruB"/>
    <property type="match status" value="1"/>
</dbReference>
<dbReference type="FunFam" id="3.30.2350.10:FF:000011">
    <property type="entry name" value="tRNA pseudouridine synthase B"/>
    <property type="match status" value="1"/>
</dbReference>
<dbReference type="Gene3D" id="3.30.2350.10">
    <property type="entry name" value="Pseudouridine synthase"/>
    <property type="match status" value="1"/>
</dbReference>
<dbReference type="Gene3D" id="2.30.130.10">
    <property type="entry name" value="PUA domain"/>
    <property type="match status" value="1"/>
</dbReference>
<dbReference type="HAMAP" id="MF_01080">
    <property type="entry name" value="TruB_bact"/>
    <property type="match status" value="1"/>
</dbReference>
<dbReference type="InterPro" id="IPR020103">
    <property type="entry name" value="PsdUridine_synth_cat_dom_sf"/>
</dbReference>
<dbReference type="InterPro" id="IPR002501">
    <property type="entry name" value="PsdUridine_synth_N"/>
</dbReference>
<dbReference type="InterPro" id="IPR015947">
    <property type="entry name" value="PUA-like_sf"/>
</dbReference>
<dbReference type="InterPro" id="IPR036974">
    <property type="entry name" value="PUA_sf"/>
</dbReference>
<dbReference type="InterPro" id="IPR015225">
    <property type="entry name" value="tRNA_psdUridine_synth_fam2_C"/>
</dbReference>
<dbReference type="InterPro" id="IPR014780">
    <property type="entry name" value="tRNA_psdUridine_synth_TruB"/>
</dbReference>
<dbReference type="InterPro" id="IPR032819">
    <property type="entry name" value="TruB_C"/>
</dbReference>
<dbReference type="NCBIfam" id="TIGR00431">
    <property type="entry name" value="TruB"/>
    <property type="match status" value="1"/>
</dbReference>
<dbReference type="PANTHER" id="PTHR13767:SF2">
    <property type="entry name" value="PSEUDOURIDYLATE SYNTHASE TRUB1"/>
    <property type="match status" value="1"/>
</dbReference>
<dbReference type="PANTHER" id="PTHR13767">
    <property type="entry name" value="TRNA-PSEUDOURIDINE SYNTHASE"/>
    <property type="match status" value="1"/>
</dbReference>
<dbReference type="Pfam" id="PF09142">
    <property type="entry name" value="TruB_C"/>
    <property type="match status" value="1"/>
</dbReference>
<dbReference type="Pfam" id="PF16198">
    <property type="entry name" value="TruB_C_2"/>
    <property type="match status" value="1"/>
</dbReference>
<dbReference type="Pfam" id="PF01509">
    <property type="entry name" value="TruB_N"/>
    <property type="match status" value="1"/>
</dbReference>
<dbReference type="SUPFAM" id="SSF55120">
    <property type="entry name" value="Pseudouridine synthase"/>
    <property type="match status" value="1"/>
</dbReference>
<dbReference type="SUPFAM" id="SSF88697">
    <property type="entry name" value="PUA domain-like"/>
    <property type="match status" value="1"/>
</dbReference>
<feature type="chain" id="PRO_1000149825" description="tRNA pseudouridine synthase B">
    <location>
        <begin position="1"/>
        <end position="298"/>
    </location>
</feature>
<feature type="active site" description="Nucleophile" evidence="1">
    <location>
        <position position="44"/>
    </location>
</feature>
<gene>
    <name evidence="1" type="primary">truB</name>
    <name type="ordered locus">MAB_3116c</name>
</gene>
<keyword id="KW-0413">Isomerase</keyword>
<keyword id="KW-1185">Reference proteome</keyword>
<keyword id="KW-0819">tRNA processing</keyword>
<reference key="1">
    <citation type="journal article" date="2009" name="PLoS ONE">
        <title>Non mycobacterial virulence genes in the genome of the emerging pathogen Mycobacterium abscessus.</title>
        <authorList>
            <person name="Ripoll F."/>
            <person name="Pasek S."/>
            <person name="Schenowitz C."/>
            <person name="Dossat C."/>
            <person name="Barbe V."/>
            <person name="Rottman M."/>
            <person name="Macheras E."/>
            <person name="Heym B."/>
            <person name="Herrmann J.L."/>
            <person name="Daffe M."/>
            <person name="Brosch R."/>
            <person name="Risler J.L."/>
            <person name="Gaillard J.L."/>
        </authorList>
    </citation>
    <scope>NUCLEOTIDE SEQUENCE [LARGE SCALE GENOMIC DNA]</scope>
    <source>
        <strain>ATCC 19977 / DSM 44196 / CCUG 20993 / CIP 104536 / JCM 13569 / NCTC 13031 / TMC 1543 / L948</strain>
    </source>
</reference>
<name>TRUB_MYCA9</name>
<accession>B1MD72</accession>
<evidence type="ECO:0000255" key="1">
    <source>
        <dbReference type="HAMAP-Rule" id="MF_01080"/>
    </source>
</evidence>